<feature type="chain" id="PRO_0000338623" description="Solute carrier family 22 member 15-like">
    <location>
        <begin position="1"/>
        <end position="487"/>
    </location>
</feature>
<feature type="transmembrane region" description="Helical" evidence="2">
    <location>
        <begin position="23"/>
        <end position="43"/>
    </location>
</feature>
<feature type="transmembrane region" description="Helical" evidence="2">
    <location>
        <begin position="90"/>
        <end position="110"/>
    </location>
</feature>
<feature type="transmembrane region" description="Helical" evidence="2">
    <location>
        <begin position="117"/>
        <end position="137"/>
    </location>
</feature>
<feature type="transmembrane region" description="Helical" evidence="2">
    <location>
        <begin position="141"/>
        <end position="161"/>
    </location>
</feature>
<feature type="transmembrane region" description="Helical" evidence="2">
    <location>
        <begin position="178"/>
        <end position="198"/>
    </location>
</feature>
<feature type="transmembrane region" description="Helical" evidence="2">
    <location>
        <begin position="203"/>
        <end position="223"/>
    </location>
</feature>
<feature type="transmembrane region" description="Helical" evidence="2">
    <location>
        <begin position="286"/>
        <end position="306"/>
    </location>
</feature>
<feature type="transmembrane region" description="Helical" evidence="2">
    <location>
        <begin position="315"/>
        <end position="335"/>
    </location>
</feature>
<feature type="transmembrane region" description="Helical" evidence="2">
    <location>
        <begin position="345"/>
        <end position="365"/>
    </location>
</feature>
<feature type="transmembrane region" description="Helical" evidence="2">
    <location>
        <begin position="374"/>
        <end position="394"/>
    </location>
</feature>
<feature type="transmembrane region" description="Helical" evidence="2">
    <location>
        <begin position="408"/>
        <end position="428"/>
    </location>
</feature>
<feature type="transmembrane region" description="Helical" evidence="2">
    <location>
        <begin position="435"/>
        <end position="455"/>
    </location>
</feature>
<feature type="glycosylation site" description="N-linked (GlcNAc...) asparagine" evidence="2">
    <location>
        <position position="70"/>
    </location>
</feature>
<protein>
    <recommendedName>
        <fullName>Solute carrier family 22 member 15-like</fullName>
    </recommendedName>
</protein>
<gene>
    <name type="primary">slc22a15b</name>
</gene>
<reference key="1">
    <citation type="submission" date="2003-01" db="EMBL/GenBank/DDBJ databases">
        <authorList>
            <consortium name="NIH - Xenopus Gene Collection (XGC) project"/>
        </authorList>
    </citation>
    <scope>NUCLEOTIDE SEQUENCE [LARGE SCALE MRNA]</scope>
    <source>
        <tissue>Embryo</tissue>
    </source>
</reference>
<keyword id="KW-0325">Glycoprotein</keyword>
<keyword id="KW-0406">Ion transport</keyword>
<keyword id="KW-0472">Membrane</keyword>
<keyword id="KW-1185">Reference proteome</keyword>
<keyword id="KW-0812">Transmembrane</keyword>
<keyword id="KW-1133">Transmembrane helix</keyword>
<keyword id="KW-0813">Transport</keyword>
<dbReference type="EMBL" id="BC045234">
    <property type="protein sequence ID" value="AAH45234.1"/>
    <property type="molecule type" value="mRNA"/>
</dbReference>
<dbReference type="RefSeq" id="NP_001079621.1">
    <property type="nucleotide sequence ID" value="NM_001086152.1"/>
</dbReference>
<dbReference type="SMR" id="Q7ZX53"/>
<dbReference type="GlyCosmos" id="Q7ZX53">
    <property type="glycosylation" value="1 site, No reported glycans"/>
</dbReference>
<dbReference type="DNASU" id="379308"/>
<dbReference type="GeneID" id="379308"/>
<dbReference type="KEGG" id="xla:379308"/>
<dbReference type="AGR" id="Xenbase:XB-GENE-5824727"/>
<dbReference type="CTD" id="379308"/>
<dbReference type="Xenbase" id="XB-GENE-5824727">
    <property type="gene designation" value="slc22a15.2.S"/>
</dbReference>
<dbReference type="OrthoDB" id="5296287at2759"/>
<dbReference type="Proteomes" id="UP000186698">
    <property type="component" value="Chromosome 7S"/>
</dbReference>
<dbReference type="Bgee" id="379308">
    <property type="expression patterns" value="Expressed in liver and 19 other cell types or tissues"/>
</dbReference>
<dbReference type="GO" id="GO:0016020">
    <property type="term" value="C:membrane"/>
    <property type="evidence" value="ECO:0007669"/>
    <property type="project" value="UniProtKB-SubCell"/>
</dbReference>
<dbReference type="GO" id="GO:0022857">
    <property type="term" value="F:transmembrane transporter activity"/>
    <property type="evidence" value="ECO:0007669"/>
    <property type="project" value="InterPro"/>
</dbReference>
<dbReference type="GO" id="GO:0006811">
    <property type="term" value="P:monoatomic ion transport"/>
    <property type="evidence" value="ECO:0007669"/>
    <property type="project" value="UniProtKB-KW"/>
</dbReference>
<dbReference type="CDD" id="cd17377">
    <property type="entry name" value="MFS_SLC22A15"/>
    <property type="match status" value="1"/>
</dbReference>
<dbReference type="Gene3D" id="1.20.1250.20">
    <property type="entry name" value="MFS general substrate transporter like domains"/>
    <property type="match status" value="1"/>
</dbReference>
<dbReference type="InterPro" id="IPR020846">
    <property type="entry name" value="MFS_dom"/>
</dbReference>
<dbReference type="InterPro" id="IPR005828">
    <property type="entry name" value="MFS_sugar_transport-like"/>
</dbReference>
<dbReference type="InterPro" id="IPR036259">
    <property type="entry name" value="MFS_trans_sf"/>
</dbReference>
<dbReference type="PANTHER" id="PTHR24064">
    <property type="entry name" value="SOLUTE CARRIER FAMILY 22 MEMBER"/>
    <property type="match status" value="1"/>
</dbReference>
<dbReference type="Pfam" id="PF00083">
    <property type="entry name" value="Sugar_tr"/>
    <property type="match status" value="1"/>
</dbReference>
<dbReference type="SUPFAM" id="SSF103473">
    <property type="entry name" value="MFS general substrate transporter"/>
    <property type="match status" value="1"/>
</dbReference>
<dbReference type="PROSITE" id="PS50850">
    <property type="entry name" value="MFS"/>
    <property type="match status" value="1"/>
</dbReference>
<name>S22FL_XENLA</name>
<accession>Q7ZX53</accession>
<evidence type="ECO:0000250" key="1"/>
<evidence type="ECO:0000255" key="2"/>
<evidence type="ECO:0000305" key="3"/>
<organism>
    <name type="scientific">Xenopus laevis</name>
    <name type="common">African clawed frog</name>
    <dbReference type="NCBI Taxonomy" id="8355"/>
    <lineage>
        <taxon>Eukaryota</taxon>
        <taxon>Metazoa</taxon>
        <taxon>Chordata</taxon>
        <taxon>Craniata</taxon>
        <taxon>Vertebrata</taxon>
        <taxon>Euteleostomi</taxon>
        <taxon>Amphibia</taxon>
        <taxon>Batrachia</taxon>
        <taxon>Anura</taxon>
        <taxon>Pipoidea</taxon>
        <taxon>Pipidae</taxon>
        <taxon>Xenopodinae</taxon>
        <taxon>Xenopus</taxon>
        <taxon>Xenopus</taxon>
    </lineage>
</organism>
<comment type="function">
    <text evidence="1">Probably transports organic cations.</text>
</comment>
<comment type="subcellular location">
    <subcellularLocation>
        <location evidence="3">Membrane</location>
        <topology evidence="3">Multi-pass membrane protein</topology>
    </subcellularLocation>
</comment>
<comment type="similarity">
    <text evidence="3">Belongs to the major facilitator (TC 2.A.1) superfamily. Organic cation transporter (TC 2.A.1.19) family.</text>
</comment>
<sequence length="487" mass="53844">MDLDEAFLYVGEFGWCQKRLTGFLTLLQIYVACQSMLIVLVGAVPEYLIDNEDISTSKEDYIKHLHDANNFTSIVSEWHLIKHEAYKVNLASSLFFAGLLIGNVFFGPLSDKLGRRPVYLSGLFFDIIFGYFTALAPSYEVFAVSRFFVGVMNGGMALVSFVLTQEYVGKSYWALTGSLTNLIFAVGIAFYALLGFYIRNWRTLAFVANSPGIFFLLLSFVLPESPRWLYSRGYTAEAEAVLESMAAGNGVERPVVRLKSCPGTTANSAHSVFDLVKYGVLRWRTILLMYIWYVCSLVYYGLTLNAGELKGNLYLNVALYGLVEVPAFPLCLYFIEKSWSGRRRATAGFLVFAGFACIFTIFVPETNGDFINPTVLALFGKLSVSAAFNVVYIYTSELYPTVVRNAGLGVCAMACRFGGILSPFIPAMKSFNPSMPFVAFGISGISAGILSLLLPETRNKPIAETIEDLQSPAYQLLSRGNEVLAST</sequence>
<proteinExistence type="evidence at transcript level"/>